<comment type="subunit">
    <text evidence="1">Part of the 50S ribosomal subunit.</text>
</comment>
<comment type="similarity">
    <text evidence="1">Belongs to the universal ribosomal protein uL30 family.</text>
</comment>
<accession>Q1LTC0</accession>
<organism>
    <name type="scientific">Baumannia cicadellinicola subsp. Homalodisca coagulata</name>
    <dbReference type="NCBI Taxonomy" id="374463"/>
    <lineage>
        <taxon>Bacteria</taxon>
        <taxon>Pseudomonadati</taxon>
        <taxon>Pseudomonadota</taxon>
        <taxon>Gammaproteobacteria</taxon>
        <taxon>Candidatus Palibaumannia</taxon>
    </lineage>
</organism>
<protein>
    <recommendedName>
        <fullName evidence="1">Large ribosomal subunit protein uL30</fullName>
    </recommendedName>
    <alternativeName>
        <fullName evidence="2">50S ribosomal protein L30</fullName>
    </alternativeName>
</protein>
<reference key="1">
    <citation type="journal article" date="2006" name="PLoS Biol.">
        <title>Metabolic complementarity and genomics of the dual bacterial symbiosis of sharpshooters.</title>
        <authorList>
            <person name="Wu D."/>
            <person name="Daugherty S.C."/>
            <person name="Van Aken S.E."/>
            <person name="Pai G.H."/>
            <person name="Watkins K.L."/>
            <person name="Khouri H."/>
            <person name="Tallon L.J."/>
            <person name="Zaborsky J.M."/>
            <person name="Dunbar H.E."/>
            <person name="Tran P.L."/>
            <person name="Moran N.A."/>
            <person name="Eisen J.A."/>
        </authorList>
    </citation>
    <scope>NUCLEOTIDE SEQUENCE [LARGE SCALE GENOMIC DNA]</scope>
</reference>
<proteinExistence type="inferred from homology"/>
<sequence length="60" mass="6727">MIKNIRITQTRSSIGCLPKHKATLAGLGLRRIGHAVERQDNPVIQGMINLISYMVKVEKQ</sequence>
<gene>
    <name evidence="1" type="primary">rpmD</name>
    <name type="ordered locus">BCI_0346</name>
</gene>
<evidence type="ECO:0000255" key="1">
    <source>
        <dbReference type="HAMAP-Rule" id="MF_01371"/>
    </source>
</evidence>
<evidence type="ECO:0000305" key="2"/>
<keyword id="KW-1185">Reference proteome</keyword>
<keyword id="KW-0687">Ribonucleoprotein</keyword>
<keyword id="KW-0689">Ribosomal protein</keyword>
<dbReference type="EMBL" id="CP000238">
    <property type="protein sequence ID" value="ABF14007.1"/>
    <property type="molecule type" value="Genomic_DNA"/>
</dbReference>
<dbReference type="RefSeq" id="WP_011520527.1">
    <property type="nucleotide sequence ID" value="NC_007984.1"/>
</dbReference>
<dbReference type="SMR" id="Q1LTC0"/>
<dbReference type="STRING" id="374463.BCI_0346"/>
<dbReference type="KEGG" id="bci:BCI_0346"/>
<dbReference type="HOGENOM" id="CLU_131047_1_4_6"/>
<dbReference type="OrthoDB" id="9812790at2"/>
<dbReference type="Proteomes" id="UP000002427">
    <property type="component" value="Chromosome"/>
</dbReference>
<dbReference type="GO" id="GO:0015934">
    <property type="term" value="C:large ribosomal subunit"/>
    <property type="evidence" value="ECO:0007669"/>
    <property type="project" value="InterPro"/>
</dbReference>
<dbReference type="GO" id="GO:0003735">
    <property type="term" value="F:structural constituent of ribosome"/>
    <property type="evidence" value="ECO:0007669"/>
    <property type="project" value="InterPro"/>
</dbReference>
<dbReference type="GO" id="GO:0006412">
    <property type="term" value="P:translation"/>
    <property type="evidence" value="ECO:0007669"/>
    <property type="project" value="UniProtKB-UniRule"/>
</dbReference>
<dbReference type="CDD" id="cd01658">
    <property type="entry name" value="Ribosomal_L30"/>
    <property type="match status" value="1"/>
</dbReference>
<dbReference type="FunFam" id="3.30.1390.20:FF:000001">
    <property type="entry name" value="50S ribosomal protein L30"/>
    <property type="match status" value="1"/>
</dbReference>
<dbReference type="Gene3D" id="3.30.1390.20">
    <property type="entry name" value="Ribosomal protein L30, ferredoxin-like fold domain"/>
    <property type="match status" value="1"/>
</dbReference>
<dbReference type="HAMAP" id="MF_01371_B">
    <property type="entry name" value="Ribosomal_uL30_B"/>
    <property type="match status" value="1"/>
</dbReference>
<dbReference type="InterPro" id="IPR036919">
    <property type="entry name" value="Ribo_uL30_ferredoxin-like_sf"/>
</dbReference>
<dbReference type="InterPro" id="IPR005996">
    <property type="entry name" value="Ribosomal_uL30_bac-type"/>
</dbReference>
<dbReference type="InterPro" id="IPR018038">
    <property type="entry name" value="Ribosomal_uL30_CS"/>
</dbReference>
<dbReference type="InterPro" id="IPR016082">
    <property type="entry name" value="Ribosomal_uL30_ferredoxin-like"/>
</dbReference>
<dbReference type="NCBIfam" id="TIGR01308">
    <property type="entry name" value="rpmD_bact"/>
    <property type="match status" value="1"/>
</dbReference>
<dbReference type="Pfam" id="PF00327">
    <property type="entry name" value="Ribosomal_L30"/>
    <property type="match status" value="1"/>
</dbReference>
<dbReference type="PIRSF" id="PIRSF002211">
    <property type="entry name" value="Ribosomal_L30_bac-type"/>
    <property type="match status" value="1"/>
</dbReference>
<dbReference type="SUPFAM" id="SSF55129">
    <property type="entry name" value="Ribosomal protein L30p/L7e"/>
    <property type="match status" value="1"/>
</dbReference>
<dbReference type="PROSITE" id="PS00634">
    <property type="entry name" value="RIBOSOMAL_L30"/>
    <property type="match status" value="1"/>
</dbReference>
<feature type="chain" id="PRO_0000273747" description="Large ribosomal subunit protein uL30">
    <location>
        <begin position="1"/>
        <end position="60"/>
    </location>
</feature>
<name>RL30_BAUCH</name>